<feature type="chain" id="PRO_0000053603" description="COUP transcription factor 1">
    <location>
        <begin position="1"/>
        <end position="422"/>
    </location>
</feature>
<feature type="domain" description="NR LBD" evidence="4">
    <location>
        <begin position="183"/>
        <end position="409"/>
    </location>
</feature>
<feature type="DNA-binding region" description="Nuclear receptor" evidence="3">
    <location>
        <begin position="82"/>
        <end position="157"/>
    </location>
</feature>
<feature type="zinc finger region" description="NR C4-type" evidence="3">
    <location>
        <begin position="85"/>
        <end position="105"/>
    </location>
</feature>
<feature type="zinc finger region" description="NR C4-type" evidence="3">
    <location>
        <begin position="121"/>
        <end position="145"/>
    </location>
</feature>
<feature type="region of interest" description="Disordered" evidence="5">
    <location>
        <begin position="1"/>
        <end position="80"/>
    </location>
</feature>
<feature type="region of interest" description="Important for dimerization">
    <location>
        <begin position="343"/>
        <end position="422"/>
    </location>
</feature>
<feature type="compositionally biased region" description="Low complexity" evidence="5">
    <location>
        <begin position="39"/>
        <end position="66"/>
    </location>
</feature>
<feature type="sequence conflict" description="In Ref. 2; AAA19853." evidence="6" ref="2">
    <location>
        <begin position="36"/>
        <end position="37"/>
    </location>
</feature>
<feature type="sequence conflict" description="In Ref. 2; AAA19853." evidence="6" ref="2">
    <original>Q</original>
    <variation>A</variation>
    <location>
        <position position="66"/>
    </location>
</feature>
<sequence length="422" mass="46085">MAMVVSSWRDPQDDVAGGNPGGPNPAAQAARGGGGGAGEQQQAGSGAPHTPQTPGQPGAPATPGTQGDKGQGPPGSGQSQQHIECVVCGDKSSGKHYGQFTCEGCKSFFKRSVRRNLTYTCRANRNCPIDQHHRNQCQYCRLKKCLKVGMRREAVQRGRMPPTQPNPGQYALTNGDPLNGHCYLSGYISLLLRAEPYPTSRYGSQCMQPNNIMGIENICELAARLLFSAVEWARNIPFFPDLQITDQVSLLRLTWSELFVLNAAQCSMPLHVAPLLAAAGLHASPMSADRVVAFMDHIRIFQEQVEKLKALHVDSAEYSCLKAIVLFTSDACGLSDAAHIESLQEKSQCALEEYVRSQYPNQPSRFGKLLLRLPSLRTVSSSVIEQLFFVRLVGKTPIETLIRDMLLSGSSFNWPYMSIQCS</sequence>
<reference key="1">
    <citation type="journal article" date="1994" name="Proc. Natl. Acad. Sci. U.S.A.">
        <title>Spatiotemporal expression patterns of chicken ovalbumin upstream promoter-transcription factors in the developing mouse central nervous system: evidence for a role in segmental patterning of the diencephalon.</title>
        <authorList>
            <person name="Qiu Y."/>
            <person name="Cooney A.J."/>
            <person name="Kuratani S."/>
            <person name="DeMayo F.J."/>
            <person name="Tsai S.Y."/>
            <person name="Tsai M.J."/>
        </authorList>
    </citation>
    <scope>NUCLEOTIDE SEQUENCE [MRNA]</scope>
    <source>
        <strain>BALB/cJ</strain>
    </source>
</reference>
<reference key="2">
    <citation type="journal article" date="1994" name="Mech. Dev.">
        <title>Cloning and expression during development of three murine members of the COUP family of nuclear orphan receptors.</title>
        <authorList>
            <person name="Jonk L.J.C."/>
            <person name="de Jonge M.E.J."/>
            <person name="Pals C.E.G.M."/>
            <person name="Wissink S."/>
            <person name="Vervaart J.M.A."/>
            <person name="Schoorlemmer J."/>
            <person name="Kruijer W."/>
        </authorList>
    </citation>
    <scope>NUCLEOTIDE SEQUENCE [MRNA]</scope>
</reference>
<organism>
    <name type="scientific">Mus musculus</name>
    <name type="common">Mouse</name>
    <dbReference type="NCBI Taxonomy" id="10090"/>
    <lineage>
        <taxon>Eukaryota</taxon>
        <taxon>Metazoa</taxon>
        <taxon>Chordata</taxon>
        <taxon>Craniata</taxon>
        <taxon>Vertebrata</taxon>
        <taxon>Euteleostomi</taxon>
        <taxon>Mammalia</taxon>
        <taxon>Eutheria</taxon>
        <taxon>Euarchontoglires</taxon>
        <taxon>Glires</taxon>
        <taxon>Rodentia</taxon>
        <taxon>Myomorpha</taxon>
        <taxon>Muroidea</taxon>
        <taxon>Muridae</taxon>
        <taxon>Murinae</taxon>
        <taxon>Mus</taxon>
        <taxon>Mus</taxon>
    </lineage>
</organism>
<proteinExistence type="evidence at transcript level"/>
<gene>
    <name type="primary">Nr2f1</name>
    <name type="synonym">Erbal3</name>
    <name type="synonym">Tfcoup1</name>
</gene>
<comment type="function">
    <text evidence="1">Coup (chicken ovalbumin upstream promoter) transcription factor binds to the ovalbumin promoter and, in conjunction with another protein (S300-II) stimulates initiation of transcription. Binds to both direct repeats and palindromes of the 5'-AGGTCA-3' motif. Represses transcriptional activity of LHCG (By similarity).</text>
</comment>
<comment type="subunit">
    <text evidence="2">Binds DNA as dimer; homodimer and probable heterodimer with NR2F6. Interacts with GTF2B; this interaction is direct. Interacts with COPS2.</text>
</comment>
<comment type="subcellular location">
    <subcellularLocation>
        <location>Nucleus</location>
    </subcellularLocation>
</comment>
<comment type="developmental stage">
    <text>Expression begins in 8.5-day-old embryos, peaks at 14-15 days and declines before birth.</text>
</comment>
<comment type="similarity">
    <text evidence="6">Belongs to the nuclear hormone receptor family. NR2 subfamily.</text>
</comment>
<protein>
    <recommendedName>
        <fullName>COUP transcription factor 1</fullName>
        <shortName>COUP-TF1</shortName>
    </recommendedName>
    <alternativeName>
        <fullName>COUP transcription factor I</fullName>
        <shortName>COUP-TF I</shortName>
    </alternativeName>
    <alternativeName>
        <fullName>Nuclear receptor subfamily 2 group F member 1</fullName>
    </alternativeName>
    <alternativeName>
        <fullName>V-erbA-related protein 3</fullName>
        <shortName>EAR-3</shortName>
    </alternativeName>
</protein>
<keyword id="KW-0010">Activator</keyword>
<keyword id="KW-0238">DNA-binding</keyword>
<keyword id="KW-0479">Metal-binding</keyword>
<keyword id="KW-0539">Nucleus</keyword>
<keyword id="KW-0675">Receptor</keyword>
<keyword id="KW-1185">Reference proteome</keyword>
<keyword id="KW-0678">Repressor</keyword>
<keyword id="KW-0804">Transcription</keyword>
<keyword id="KW-0805">Transcription regulation</keyword>
<keyword id="KW-0862">Zinc</keyword>
<keyword id="KW-0863">Zinc-finger</keyword>
<accession>Q60632</accession>
<accession>Q61438</accession>
<dbReference type="EMBL" id="U07625">
    <property type="protein sequence ID" value="AAA19853.1"/>
    <property type="molecule type" value="mRNA"/>
</dbReference>
<dbReference type="EMBL" id="X74134">
    <property type="protein sequence ID" value="CAA52231.1"/>
    <property type="molecule type" value="mRNA"/>
</dbReference>
<dbReference type="PIR" id="I48305">
    <property type="entry name" value="I48305"/>
</dbReference>
<dbReference type="RefSeq" id="NP_034281.2">
    <property type="nucleotide sequence ID" value="NM_010151.3"/>
</dbReference>
<dbReference type="SMR" id="Q60632"/>
<dbReference type="BioGRID" id="199495">
    <property type="interactions" value="1"/>
</dbReference>
<dbReference type="FunCoup" id="Q60632">
    <property type="interactions" value="2068"/>
</dbReference>
<dbReference type="STRING" id="10090.ENSMUSP00000089036"/>
<dbReference type="GlyGen" id="Q60632">
    <property type="glycosylation" value="2 sites, 1 N-linked glycan (1 site)"/>
</dbReference>
<dbReference type="iPTMnet" id="Q60632"/>
<dbReference type="PhosphoSitePlus" id="Q60632"/>
<dbReference type="PaxDb" id="10090-ENSMUSP00000089036"/>
<dbReference type="PeptideAtlas" id="Q60632"/>
<dbReference type="ProteomicsDB" id="285253"/>
<dbReference type="Pumba" id="Q60632"/>
<dbReference type="DNASU" id="13865"/>
<dbReference type="GeneID" id="13865"/>
<dbReference type="KEGG" id="mmu:13865"/>
<dbReference type="AGR" id="MGI:1352451"/>
<dbReference type="CTD" id="7025"/>
<dbReference type="MGI" id="MGI:1352451">
    <property type="gene designation" value="Nr2f1"/>
</dbReference>
<dbReference type="eggNOG" id="KOG3575">
    <property type="taxonomic scope" value="Eukaryota"/>
</dbReference>
<dbReference type="InParanoid" id="Q60632"/>
<dbReference type="OrthoDB" id="5873264at2759"/>
<dbReference type="PhylomeDB" id="Q60632"/>
<dbReference type="Reactome" id="R-MMU-383280">
    <property type="pathway name" value="Nuclear Receptor transcription pathway"/>
</dbReference>
<dbReference type="BioGRID-ORCS" id="13865">
    <property type="hits" value="1 hit in 76 CRISPR screens"/>
</dbReference>
<dbReference type="ChiTaRS" id="Nr2f1">
    <property type="organism name" value="mouse"/>
</dbReference>
<dbReference type="PRO" id="PR:Q60632"/>
<dbReference type="Proteomes" id="UP000000589">
    <property type="component" value="Unplaced"/>
</dbReference>
<dbReference type="RNAct" id="Q60632">
    <property type="molecule type" value="protein"/>
</dbReference>
<dbReference type="GO" id="GO:0005634">
    <property type="term" value="C:nucleus"/>
    <property type="evidence" value="ECO:0000314"/>
    <property type="project" value="MGI"/>
</dbReference>
<dbReference type="GO" id="GO:0003700">
    <property type="term" value="F:DNA-binding transcription factor activity"/>
    <property type="evidence" value="ECO:0007669"/>
    <property type="project" value="InterPro"/>
</dbReference>
<dbReference type="GO" id="GO:0043565">
    <property type="term" value="F:sequence-specific DNA binding"/>
    <property type="evidence" value="ECO:0000314"/>
    <property type="project" value="MGI"/>
</dbReference>
<dbReference type="GO" id="GO:0008270">
    <property type="term" value="F:zinc ion binding"/>
    <property type="evidence" value="ECO:0007669"/>
    <property type="project" value="UniProtKB-KW"/>
</dbReference>
<dbReference type="GO" id="GO:0021796">
    <property type="term" value="P:cerebral cortex regionalization"/>
    <property type="evidence" value="ECO:0000315"/>
    <property type="project" value="MGI"/>
</dbReference>
<dbReference type="GO" id="GO:0030900">
    <property type="term" value="P:forebrain development"/>
    <property type="evidence" value="ECO:0000314"/>
    <property type="project" value="MGI"/>
</dbReference>
<dbReference type="GO" id="GO:1904936">
    <property type="term" value="P:interneuron migration"/>
    <property type="evidence" value="ECO:0000314"/>
    <property type="project" value="MGI"/>
</dbReference>
<dbReference type="GO" id="GO:0000122">
    <property type="term" value="P:negative regulation of transcription by RNA polymerase II"/>
    <property type="evidence" value="ECO:0000314"/>
    <property type="project" value="MGI"/>
</dbReference>
<dbReference type="GO" id="GO:0001764">
    <property type="term" value="P:neuron migration"/>
    <property type="evidence" value="ECO:0000314"/>
    <property type="project" value="MGI"/>
</dbReference>
<dbReference type="GO" id="GO:1902895">
    <property type="term" value="P:positive regulation of miRNA transcription"/>
    <property type="evidence" value="ECO:0000315"/>
    <property type="project" value="MGI"/>
</dbReference>
<dbReference type="GO" id="GO:0010468">
    <property type="term" value="P:regulation of gene expression"/>
    <property type="evidence" value="ECO:0000316"/>
    <property type="project" value="MGI"/>
</dbReference>
<dbReference type="CDD" id="cd06958">
    <property type="entry name" value="NR_DBD_COUP_TF"/>
    <property type="match status" value="1"/>
</dbReference>
<dbReference type="CDD" id="cd06948">
    <property type="entry name" value="NR_LBD_COUP-TF"/>
    <property type="match status" value="1"/>
</dbReference>
<dbReference type="FunFam" id="1.10.565.10:FF:000003">
    <property type="entry name" value="Coup transcription factor 2 isoform 1"/>
    <property type="match status" value="1"/>
</dbReference>
<dbReference type="FunFam" id="3.30.50.10:FF:000016">
    <property type="entry name" value="Nuclear receptor subfamily 2 group F member 1"/>
    <property type="match status" value="1"/>
</dbReference>
<dbReference type="Gene3D" id="3.30.50.10">
    <property type="entry name" value="Erythroid Transcription Factor GATA-1, subunit A"/>
    <property type="match status" value="1"/>
</dbReference>
<dbReference type="Gene3D" id="1.10.565.10">
    <property type="entry name" value="Retinoid X Receptor"/>
    <property type="match status" value="1"/>
</dbReference>
<dbReference type="InterPro" id="IPR035500">
    <property type="entry name" value="NHR-like_dom_sf"/>
</dbReference>
<dbReference type="InterPro" id="IPR000536">
    <property type="entry name" value="Nucl_hrmn_rcpt_lig-bd"/>
</dbReference>
<dbReference type="InterPro" id="IPR050274">
    <property type="entry name" value="Nuclear_hormone_rcpt_NR2"/>
</dbReference>
<dbReference type="InterPro" id="IPR001723">
    <property type="entry name" value="Nuclear_hrmn_rcpt"/>
</dbReference>
<dbReference type="InterPro" id="IPR001628">
    <property type="entry name" value="Znf_hrmn_rcpt"/>
</dbReference>
<dbReference type="InterPro" id="IPR013088">
    <property type="entry name" value="Znf_NHR/GATA"/>
</dbReference>
<dbReference type="PANTHER" id="PTHR24083">
    <property type="entry name" value="NUCLEAR HORMONE RECEPTOR"/>
    <property type="match status" value="1"/>
</dbReference>
<dbReference type="Pfam" id="PF00104">
    <property type="entry name" value="Hormone_recep"/>
    <property type="match status" value="1"/>
</dbReference>
<dbReference type="Pfam" id="PF00105">
    <property type="entry name" value="zf-C4"/>
    <property type="match status" value="1"/>
</dbReference>
<dbReference type="PRINTS" id="PR01282">
    <property type="entry name" value="COUPTNFACTOR"/>
</dbReference>
<dbReference type="PRINTS" id="PR00398">
    <property type="entry name" value="STRDHORMONER"/>
</dbReference>
<dbReference type="PRINTS" id="PR00047">
    <property type="entry name" value="STROIDFINGER"/>
</dbReference>
<dbReference type="SMART" id="SM00430">
    <property type="entry name" value="HOLI"/>
    <property type="match status" value="1"/>
</dbReference>
<dbReference type="SMART" id="SM00399">
    <property type="entry name" value="ZnF_C4"/>
    <property type="match status" value="1"/>
</dbReference>
<dbReference type="SUPFAM" id="SSF57716">
    <property type="entry name" value="Glucocorticoid receptor-like (DNA-binding domain)"/>
    <property type="match status" value="1"/>
</dbReference>
<dbReference type="SUPFAM" id="SSF48508">
    <property type="entry name" value="Nuclear receptor ligand-binding domain"/>
    <property type="match status" value="1"/>
</dbReference>
<dbReference type="PROSITE" id="PS51843">
    <property type="entry name" value="NR_LBD"/>
    <property type="match status" value="1"/>
</dbReference>
<dbReference type="PROSITE" id="PS00031">
    <property type="entry name" value="NUCLEAR_REC_DBD_1"/>
    <property type="match status" value="1"/>
</dbReference>
<dbReference type="PROSITE" id="PS51030">
    <property type="entry name" value="NUCLEAR_REC_DBD_2"/>
    <property type="match status" value="1"/>
</dbReference>
<name>COT1_MOUSE</name>
<evidence type="ECO:0000250" key="1"/>
<evidence type="ECO:0000250" key="2">
    <source>
        <dbReference type="UniProtKB" id="P10589"/>
    </source>
</evidence>
<evidence type="ECO:0000255" key="3">
    <source>
        <dbReference type="PROSITE-ProRule" id="PRU00407"/>
    </source>
</evidence>
<evidence type="ECO:0000255" key="4">
    <source>
        <dbReference type="PROSITE-ProRule" id="PRU01189"/>
    </source>
</evidence>
<evidence type="ECO:0000256" key="5">
    <source>
        <dbReference type="SAM" id="MobiDB-lite"/>
    </source>
</evidence>
<evidence type="ECO:0000305" key="6"/>